<name>RS14_STAES</name>
<reference key="1">
    <citation type="journal article" date="2003" name="Mol. Microbiol.">
        <title>Genome-based analysis of virulence genes in a non-biofilm-forming Staphylococcus epidermidis strain (ATCC 12228).</title>
        <authorList>
            <person name="Zhang Y.-Q."/>
            <person name="Ren S.-X."/>
            <person name="Li H.-L."/>
            <person name="Wang Y.-X."/>
            <person name="Fu G."/>
            <person name="Yang J."/>
            <person name="Qin Z.-Q."/>
            <person name="Miao Y.-G."/>
            <person name="Wang W.-Y."/>
            <person name="Chen R.-S."/>
            <person name="Shen Y."/>
            <person name="Chen Z."/>
            <person name="Yuan Z.-H."/>
            <person name="Zhao G.-P."/>
            <person name="Qu D."/>
            <person name="Danchin A."/>
            <person name="Wen Y.-M."/>
        </authorList>
    </citation>
    <scope>NUCLEOTIDE SEQUENCE [LARGE SCALE GENOMIC DNA]</scope>
    <source>
        <strain>ATCC 12228 / FDA PCI 1200</strain>
    </source>
</reference>
<organism>
    <name type="scientific">Staphylococcus epidermidis (strain ATCC 12228 / FDA PCI 1200)</name>
    <dbReference type="NCBI Taxonomy" id="176280"/>
    <lineage>
        <taxon>Bacteria</taxon>
        <taxon>Bacillati</taxon>
        <taxon>Bacillota</taxon>
        <taxon>Bacilli</taxon>
        <taxon>Bacillales</taxon>
        <taxon>Staphylococcaceae</taxon>
        <taxon>Staphylococcus</taxon>
    </lineage>
</organism>
<proteinExistence type="inferred from homology"/>
<keyword id="KW-0687">Ribonucleoprotein</keyword>
<keyword id="KW-0689">Ribosomal protein</keyword>
<keyword id="KW-0694">RNA-binding</keyword>
<keyword id="KW-0699">rRNA-binding</keyword>
<dbReference type="EMBL" id="AE015929">
    <property type="protein sequence ID" value="AAO04615.1"/>
    <property type="molecule type" value="Genomic_DNA"/>
</dbReference>
<dbReference type="RefSeq" id="NP_764573.1">
    <property type="nucleotide sequence ID" value="NC_004461.1"/>
</dbReference>
<dbReference type="RefSeq" id="WP_001831302.1">
    <property type="nucleotide sequence ID" value="NZ_WBME01000057.1"/>
</dbReference>
<dbReference type="SMR" id="Q8CSP8"/>
<dbReference type="GeneID" id="50018854"/>
<dbReference type="KEGG" id="sep:SE_1018"/>
<dbReference type="PATRIC" id="fig|176280.10.peg.993"/>
<dbReference type="eggNOG" id="COG0199">
    <property type="taxonomic scope" value="Bacteria"/>
</dbReference>
<dbReference type="HOGENOM" id="CLU_139869_0_0_9"/>
<dbReference type="OrthoDB" id="9810484at2"/>
<dbReference type="Proteomes" id="UP000001411">
    <property type="component" value="Chromosome"/>
</dbReference>
<dbReference type="GO" id="GO:0005737">
    <property type="term" value="C:cytoplasm"/>
    <property type="evidence" value="ECO:0007669"/>
    <property type="project" value="UniProtKB-ARBA"/>
</dbReference>
<dbReference type="GO" id="GO:0015935">
    <property type="term" value="C:small ribosomal subunit"/>
    <property type="evidence" value="ECO:0007669"/>
    <property type="project" value="TreeGrafter"/>
</dbReference>
<dbReference type="GO" id="GO:0019843">
    <property type="term" value="F:rRNA binding"/>
    <property type="evidence" value="ECO:0007669"/>
    <property type="project" value="UniProtKB-UniRule"/>
</dbReference>
<dbReference type="GO" id="GO:0003735">
    <property type="term" value="F:structural constituent of ribosome"/>
    <property type="evidence" value="ECO:0007669"/>
    <property type="project" value="InterPro"/>
</dbReference>
<dbReference type="GO" id="GO:0006412">
    <property type="term" value="P:translation"/>
    <property type="evidence" value="ECO:0007669"/>
    <property type="project" value="UniProtKB-UniRule"/>
</dbReference>
<dbReference type="FunFam" id="4.10.830.10:FF:000003">
    <property type="entry name" value="30S ribosomal protein S14"/>
    <property type="match status" value="1"/>
</dbReference>
<dbReference type="Gene3D" id="4.10.830.10">
    <property type="entry name" value="30s Ribosomal Protein S14, Chain N"/>
    <property type="match status" value="1"/>
</dbReference>
<dbReference type="HAMAP" id="MF_00537">
    <property type="entry name" value="Ribosomal_uS14_1"/>
    <property type="match status" value="1"/>
</dbReference>
<dbReference type="InterPro" id="IPR001209">
    <property type="entry name" value="Ribosomal_uS14"/>
</dbReference>
<dbReference type="InterPro" id="IPR023036">
    <property type="entry name" value="Ribosomal_uS14_bac/plastid"/>
</dbReference>
<dbReference type="InterPro" id="IPR018271">
    <property type="entry name" value="Ribosomal_uS14_CS"/>
</dbReference>
<dbReference type="InterPro" id="IPR043140">
    <property type="entry name" value="Ribosomal_uS14_sf"/>
</dbReference>
<dbReference type="NCBIfam" id="NF006477">
    <property type="entry name" value="PRK08881.1"/>
    <property type="match status" value="1"/>
</dbReference>
<dbReference type="PANTHER" id="PTHR19836">
    <property type="entry name" value="30S RIBOSOMAL PROTEIN S14"/>
    <property type="match status" value="1"/>
</dbReference>
<dbReference type="PANTHER" id="PTHR19836:SF19">
    <property type="entry name" value="SMALL RIBOSOMAL SUBUNIT PROTEIN US14M"/>
    <property type="match status" value="1"/>
</dbReference>
<dbReference type="Pfam" id="PF00253">
    <property type="entry name" value="Ribosomal_S14"/>
    <property type="match status" value="1"/>
</dbReference>
<dbReference type="SUPFAM" id="SSF57716">
    <property type="entry name" value="Glucocorticoid receptor-like (DNA-binding domain)"/>
    <property type="match status" value="1"/>
</dbReference>
<dbReference type="PROSITE" id="PS00527">
    <property type="entry name" value="RIBOSOMAL_S14"/>
    <property type="match status" value="1"/>
</dbReference>
<protein>
    <recommendedName>
        <fullName evidence="1">Small ribosomal subunit protein uS14A</fullName>
    </recommendedName>
    <alternativeName>
        <fullName evidence="2">30S ribosomal protein S14</fullName>
    </alternativeName>
</protein>
<accession>Q8CSP8</accession>
<comment type="function">
    <text evidence="1">Binds 16S rRNA, required for the assembly of 30S particles and may also be responsible for determining the conformation of the 16S rRNA at the A site.</text>
</comment>
<comment type="subunit">
    <text evidence="1">Part of the 30S ribosomal subunit. Contacts proteins S3 and S10.</text>
</comment>
<comment type="similarity">
    <text evidence="1">Belongs to the universal ribosomal protein uS14 family.</text>
</comment>
<evidence type="ECO:0000255" key="1">
    <source>
        <dbReference type="HAMAP-Rule" id="MF_00537"/>
    </source>
</evidence>
<evidence type="ECO:0000305" key="2"/>
<feature type="chain" id="PRO_0000269063" description="Small ribosomal subunit protein uS14A">
    <location>
        <begin position="1"/>
        <end position="89"/>
    </location>
</feature>
<sequence length="89" mass="10511">MAKKSKIAKEQKRQELVNKYYELRKELKAKGDYEALRKLPRDSSPTRLTRRCKVTGRPRGVLRKFEMSRIAFREHAHKGQIPGVKKSSW</sequence>
<gene>
    <name evidence="1" type="primary">rpsN</name>
    <name type="synonym">rpsN2</name>
    <name type="ordered locus">SE_1018</name>
</gene>